<sequence length="313" mass="34341">MSAKMEPTFYEDALNASFAPPESAYGYNNAKVLKQSMTLNLSDPASSLKPHLRNKNADILTSPDVGLLKLASPELERLIIQSSNGLITTTPTPTQFLCPKNVTDEQEGFAEGFVRALAELHNQNTLPSVTSAAQPVSGGMAPVSSMAGGGSFNTSLHSEPPVYANLSNFNPNALNSAPNYNANGMGYAPQHHINPQMPVQHPRLQALKEEPQTVPEMPGETPPLSPIDMESQERIKAERKRMRNRIAASKCRKRKLERIARLEEKVKTLKAQNSELASTANMLREQVAQLKQKVMNHVNSGCQLMLTQQLQTF</sequence>
<accession>P12981</accession>
<organism>
    <name type="scientific">Coturnix japonica</name>
    <name type="common">Japanese quail</name>
    <name type="synonym">Coturnix coturnix japonica</name>
    <dbReference type="NCBI Taxonomy" id="93934"/>
    <lineage>
        <taxon>Eukaryota</taxon>
        <taxon>Metazoa</taxon>
        <taxon>Chordata</taxon>
        <taxon>Craniata</taxon>
        <taxon>Vertebrata</taxon>
        <taxon>Euteleostomi</taxon>
        <taxon>Archelosauria</taxon>
        <taxon>Archosauria</taxon>
        <taxon>Dinosauria</taxon>
        <taxon>Saurischia</taxon>
        <taxon>Theropoda</taxon>
        <taxon>Coelurosauria</taxon>
        <taxon>Aves</taxon>
        <taxon>Neognathae</taxon>
        <taxon>Galloanserae</taxon>
        <taxon>Galliformes</taxon>
        <taxon>Phasianidae</taxon>
        <taxon>Perdicinae</taxon>
        <taxon>Coturnix</taxon>
    </lineage>
</organism>
<gene>
    <name type="primary">JUN</name>
</gene>
<reference key="1">
    <citation type="journal article" date="1989" name="Nucleic Acids Res.">
        <title>Nucleotide sequence of the quail c-jun protooncogene.</title>
        <authorList>
            <person name="Brun G."/>
            <person name="la Vista N."/>
            <person name="Dangy J.-P."/>
            <person name="Castellazzi M."/>
        </authorList>
    </citation>
    <scope>NUCLEOTIDE SEQUENCE [MRNA]</scope>
</reference>
<protein>
    <recommendedName>
        <fullName evidence="3">Transcription factor Jun</fullName>
    </recommendedName>
    <alternativeName>
        <fullName>Proto-oncogene c-Jun</fullName>
    </alternativeName>
    <alternativeName>
        <fullName evidence="3">Transcription factor AP-1 subunit Jun</fullName>
    </alternativeName>
</protein>
<evidence type="ECO:0000250" key="1">
    <source>
        <dbReference type="UniProtKB" id="P05412"/>
    </source>
</evidence>
<evidence type="ECO:0000255" key="2">
    <source>
        <dbReference type="PROSITE-ProRule" id="PRU00978"/>
    </source>
</evidence>
<evidence type="ECO:0000305" key="3"/>
<proteinExistence type="evidence at transcript level"/>
<keyword id="KW-0010">Activator</keyword>
<keyword id="KW-0238">DNA-binding</keyword>
<keyword id="KW-0539">Nucleus</keyword>
<keyword id="KW-0656">Proto-oncogene</keyword>
<keyword id="KW-1185">Reference proteome</keyword>
<keyword id="KW-0804">Transcription</keyword>
<keyword id="KW-0805">Transcription regulation</keyword>
<comment type="function">
    <text evidence="1">Transcription factor that recognizes and binds to the enhancer heptamer motif 5'-TGA[CG]TCA-3'. May be involved in activated KRAS-mediated transcriptional activation of USP28. May bind to the USP28 promoter.</text>
</comment>
<comment type="subunit">
    <text>Interacts with FOS to form a dimer.</text>
</comment>
<comment type="subcellular location">
    <subcellularLocation>
        <location>Nucleus</location>
    </subcellularLocation>
</comment>
<comment type="similarity">
    <text evidence="3">Belongs to the bZIP family. Jun subfamily.</text>
</comment>
<name>JUN_COTJA</name>
<feature type="chain" id="PRO_0000076434" description="Transcription factor Jun">
    <location>
        <begin position="1"/>
        <end position="313"/>
    </location>
</feature>
<feature type="domain" description="bZIP" evidence="2">
    <location>
        <begin position="234"/>
        <end position="297"/>
    </location>
</feature>
<feature type="region of interest" description="Basic motif" evidence="2">
    <location>
        <begin position="234"/>
        <end position="261"/>
    </location>
</feature>
<feature type="region of interest" description="Leucine-zipper" evidence="2">
    <location>
        <begin position="262"/>
        <end position="290"/>
    </location>
</feature>
<dbReference type="EMBL" id="X15547">
    <property type="protein sequence ID" value="CAA33553.1"/>
    <property type="molecule type" value="mRNA"/>
</dbReference>
<dbReference type="PIR" id="S05963">
    <property type="entry name" value="TVQJUN"/>
</dbReference>
<dbReference type="BMRB" id="P12981"/>
<dbReference type="SMR" id="P12981"/>
<dbReference type="Proteomes" id="UP000694412">
    <property type="component" value="Unplaced"/>
</dbReference>
<dbReference type="GO" id="GO:0005634">
    <property type="term" value="C:nucleus"/>
    <property type="evidence" value="ECO:0007669"/>
    <property type="project" value="UniProtKB-SubCell"/>
</dbReference>
<dbReference type="GO" id="GO:0005667">
    <property type="term" value="C:transcription regulator complex"/>
    <property type="evidence" value="ECO:0007669"/>
    <property type="project" value="TreeGrafter"/>
</dbReference>
<dbReference type="GO" id="GO:0000981">
    <property type="term" value="F:DNA-binding transcription factor activity, RNA polymerase II-specific"/>
    <property type="evidence" value="ECO:0007669"/>
    <property type="project" value="TreeGrafter"/>
</dbReference>
<dbReference type="GO" id="GO:0000978">
    <property type="term" value="F:RNA polymerase II cis-regulatory region sequence-specific DNA binding"/>
    <property type="evidence" value="ECO:0007669"/>
    <property type="project" value="TreeGrafter"/>
</dbReference>
<dbReference type="GO" id="GO:0000976">
    <property type="term" value="F:transcription cis-regulatory region binding"/>
    <property type="evidence" value="ECO:0000250"/>
    <property type="project" value="UniProtKB"/>
</dbReference>
<dbReference type="GO" id="GO:0045944">
    <property type="term" value="P:positive regulation of transcription by RNA polymerase II"/>
    <property type="evidence" value="ECO:0000250"/>
    <property type="project" value="UniProtKB"/>
</dbReference>
<dbReference type="GO" id="GO:0051726">
    <property type="term" value="P:regulation of cell cycle"/>
    <property type="evidence" value="ECO:0007669"/>
    <property type="project" value="TreeGrafter"/>
</dbReference>
<dbReference type="GO" id="GO:0042127">
    <property type="term" value="P:regulation of cell population proliferation"/>
    <property type="evidence" value="ECO:0007669"/>
    <property type="project" value="TreeGrafter"/>
</dbReference>
<dbReference type="CDD" id="cd14696">
    <property type="entry name" value="bZIP_Jun"/>
    <property type="match status" value="1"/>
</dbReference>
<dbReference type="FunFam" id="1.20.5.170:FF:000012">
    <property type="entry name" value="Putative transcription factor AP-1"/>
    <property type="match status" value="1"/>
</dbReference>
<dbReference type="Gene3D" id="1.20.5.170">
    <property type="match status" value="1"/>
</dbReference>
<dbReference type="InterPro" id="IPR050946">
    <property type="entry name" value="AP-1_TF_bZIP"/>
</dbReference>
<dbReference type="InterPro" id="IPR004827">
    <property type="entry name" value="bZIP"/>
</dbReference>
<dbReference type="InterPro" id="IPR046347">
    <property type="entry name" value="bZIP_sf"/>
</dbReference>
<dbReference type="InterPro" id="IPR005643">
    <property type="entry name" value="JNK"/>
</dbReference>
<dbReference type="InterPro" id="IPR002112">
    <property type="entry name" value="Leuzip_Jun"/>
</dbReference>
<dbReference type="InterPro" id="IPR008917">
    <property type="entry name" value="TF_DNA-bd_sf"/>
</dbReference>
<dbReference type="PANTHER" id="PTHR11462">
    <property type="entry name" value="JUN TRANSCRIPTION FACTOR-RELATED"/>
    <property type="match status" value="1"/>
</dbReference>
<dbReference type="PANTHER" id="PTHR11462:SF8">
    <property type="entry name" value="TRANSCRIPTION FACTOR JUN"/>
    <property type="match status" value="1"/>
</dbReference>
<dbReference type="Pfam" id="PF00170">
    <property type="entry name" value="bZIP_1"/>
    <property type="match status" value="1"/>
</dbReference>
<dbReference type="Pfam" id="PF03957">
    <property type="entry name" value="Jun"/>
    <property type="match status" value="1"/>
</dbReference>
<dbReference type="PRINTS" id="PR00043">
    <property type="entry name" value="LEUZIPPRJUN"/>
</dbReference>
<dbReference type="SMART" id="SM00338">
    <property type="entry name" value="BRLZ"/>
    <property type="match status" value="1"/>
</dbReference>
<dbReference type="SUPFAM" id="SSF47454">
    <property type="entry name" value="A DNA-binding domain in eukaryotic transcription factors"/>
    <property type="match status" value="1"/>
</dbReference>
<dbReference type="SUPFAM" id="SSF57959">
    <property type="entry name" value="Leucine zipper domain"/>
    <property type="match status" value="1"/>
</dbReference>
<dbReference type="PROSITE" id="PS50217">
    <property type="entry name" value="BZIP"/>
    <property type="match status" value="1"/>
</dbReference>
<dbReference type="PROSITE" id="PS00036">
    <property type="entry name" value="BZIP_BASIC"/>
    <property type="match status" value="1"/>
</dbReference>